<keyword id="KW-0175">Coiled coil</keyword>
<keyword id="KW-0256">Endoplasmic reticulum</keyword>
<keyword id="KW-0472">Membrane</keyword>
<keyword id="KW-0521">NADP</keyword>
<keyword id="KW-0560">Oxidoreductase</keyword>
<keyword id="KW-1185">Reference proteome</keyword>
<keyword id="KW-0812">Transmembrane</keyword>
<keyword id="KW-1133">Transmembrane helix</keyword>
<evidence type="ECO:0000250" key="1">
    <source>
        <dbReference type="UniProtKB" id="L0E2Z4"/>
    </source>
</evidence>
<evidence type="ECO:0000250" key="2">
    <source>
        <dbReference type="UniProtKB" id="O93868"/>
    </source>
</evidence>
<evidence type="ECO:0000255" key="3"/>
<evidence type="ECO:0000256" key="4">
    <source>
        <dbReference type="SAM" id="MobiDB-lite"/>
    </source>
</evidence>
<evidence type="ECO:0000269" key="5">
    <source>
    </source>
</evidence>
<evidence type="ECO:0000269" key="6">
    <source>
    </source>
</evidence>
<evidence type="ECO:0000269" key="7">
    <source>
    </source>
</evidence>
<evidence type="ECO:0000305" key="8"/>
<evidence type="ECO:0000305" key="9">
    <source>
    </source>
</evidence>
<sequence length="407" mass="46503">MPLNIIGTALLDGTDKIPYYQTIKKVAPYVLATGAIKYWSRGPSNTWERKLHGKVYLVTGATSQGMGTSVAYKMAELGAQLIILTREVDEWVTEWCEELREKTKNELIFVEKCDLSNLWEIRKFATSWLDNSPPRRLDGVIVMSGDMEPWGIPKISLPQRRSSKDGLELQIATNYVAIFHLLNLLQPSFKAQPPDRDVRIILATCWLQVVGDINIEDPLWQNAKYKSALKFFASSKLQLGLSMMELQRRLTEDIKNQKTNGAERTGKNVTITMVQPGTMRSNSLRRVISNGSVVLLIILYCILLYPILWLFTKSGRRGDQSFLYALMTPELEEVNLKDTKVKYISDCSIVKFARKEFDDEELQKKLFDNTERDILQLEKKVAAKRNANKTGNQNSKKKSQNKSRKDD</sequence>
<protein>
    <recommendedName>
        <fullName evidence="8">Uncharacterized oxidoreductase YNL181W</fullName>
        <ecNumber>1.-.-.-</ecNumber>
    </recommendedName>
    <alternativeName>
        <fullName>Potentiates bioactive compound response protein 1</fullName>
    </alternativeName>
</protein>
<name>PBR1_YEAST</name>
<accession>P53878</accession>
<accession>D6W105</accession>
<comment type="function">
    <text evidence="9">May be involved in lipid metabolism.</text>
</comment>
<comment type="subcellular location">
    <subcellularLocation>
        <location evidence="5 7">Endoplasmic reticulum membrane</location>
        <topology evidence="3">Single-pass membrane protein</topology>
    </subcellularLocation>
</comment>
<comment type="miscellaneous">
    <text evidence="6">Present with 13900 molecules/cell in log phase SD medium.</text>
</comment>
<comment type="similarity">
    <text evidence="8">Belongs to the short-chain dehydrogenases/reductases (SDR) family.</text>
</comment>
<organism>
    <name type="scientific">Saccharomyces cerevisiae (strain ATCC 204508 / S288c)</name>
    <name type="common">Baker's yeast</name>
    <dbReference type="NCBI Taxonomy" id="559292"/>
    <lineage>
        <taxon>Eukaryota</taxon>
        <taxon>Fungi</taxon>
        <taxon>Dikarya</taxon>
        <taxon>Ascomycota</taxon>
        <taxon>Saccharomycotina</taxon>
        <taxon>Saccharomycetes</taxon>
        <taxon>Saccharomycetales</taxon>
        <taxon>Saccharomycetaceae</taxon>
        <taxon>Saccharomyces</taxon>
    </lineage>
</organism>
<gene>
    <name type="primary">PBR1</name>
    <name type="ordered locus">YNL181W</name>
    <name type="ORF">N1640</name>
</gene>
<feature type="chain" id="PRO_0000203405" description="Uncharacterized oxidoreductase YNL181W">
    <location>
        <begin position="1"/>
        <end position="407"/>
    </location>
</feature>
<feature type="topological domain" description="Lumenal" evidence="3">
    <location>
        <begin position="1"/>
        <end position="290"/>
    </location>
</feature>
<feature type="transmembrane region" description="Helical" evidence="3">
    <location>
        <begin position="291"/>
        <end position="311"/>
    </location>
</feature>
<feature type="topological domain" description="Cytoplasmic" evidence="3">
    <location>
        <begin position="312"/>
        <end position="407"/>
    </location>
</feature>
<feature type="region of interest" description="Disordered" evidence="4">
    <location>
        <begin position="383"/>
        <end position="407"/>
    </location>
</feature>
<feature type="coiled-coil region" evidence="3">
    <location>
        <begin position="361"/>
        <end position="390"/>
    </location>
</feature>
<feature type="compositionally biased region" description="Basic residues" evidence="4">
    <location>
        <begin position="395"/>
        <end position="407"/>
    </location>
</feature>
<feature type="active site" description="Lowers pKa of active site Tyr" evidence="2">
    <location>
        <position position="236"/>
    </location>
</feature>
<feature type="binding site" evidence="1">
    <location>
        <position position="114"/>
    </location>
    <ligand>
        <name>NADP(+)</name>
        <dbReference type="ChEBI" id="CHEBI:58349"/>
    </ligand>
</feature>
<feature type="binding site" evidence="2">
    <location>
        <position position="236"/>
    </location>
    <ligand>
        <name>NADP(+)</name>
        <dbReference type="ChEBI" id="CHEBI:58349"/>
    </ligand>
</feature>
<feature type="binding site" evidence="1">
    <location>
        <position position="281"/>
    </location>
    <ligand>
        <name>NADP(+)</name>
        <dbReference type="ChEBI" id="CHEBI:58349"/>
    </ligand>
</feature>
<feature type="sequence conflict" description="In Ref. 1; CAA96073." evidence="8" ref="1">
    <original>A</original>
    <variation>P</variation>
    <location>
        <position position="262"/>
    </location>
</feature>
<dbReference type="EC" id="1.-.-.-"/>
<dbReference type="EMBL" id="Z71457">
    <property type="protein sequence ID" value="CAA96073.1"/>
    <property type="molecule type" value="Genomic_DNA"/>
</dbReference>
<dbReference type="EMBL" id="BK006947">
    <property type="protein sequence ID" value="DAA10371.2"/>
    <property type="molecule type" value="Genomic_DNA"/>
</dbReference>
<dbReference type="PIR" id="S63136">
    <property type="entry name" value="S63136"/>
</dbReference>
<dbReference type="RefSeq" id="NP_014218.2">
    <property type="nucleotide sequence ID" value="NM_001183019.2"/>
</dbReference>
<dbReference type="SMR" id="P53878"/>
<dbReference type="BioGRID" id="35651">
    <property type="interactions" value="1045"/>
</dbReference>
<dbReference type="DIP" id="DIP-6413N"/>
<dbReference type="FunCoup" id="P53878">
    <property type="interactions" value="114"/>
</dbReference>
<dbReference type="IntAct" id="P53878">
    <property type="interactions" value="3"/>
</dbReference>
<dbReference type="STRING" id="4932.YNL181W"/>
<dbReference type="iPTMnet" id="P53878"/>
<dbReference type="PaxDb" id="4932-YNL181W"/>
<dbReference type="PeptideAtlas" id="P53878"/>
<dbReference type="EnsemblFungi" id="YNL181W_mRNA">
    <property type="protein sequence ID" value="YNL181W"/>
    <property type="gene ID" value="YNL181W"/>
</dbReference>
<dbReference type="GeneID" id="855540"/>
<dbReference type="KEGG" id="sce:YNL181W"/>
<dbReference type="AGR" id="SGD:S000005125"/>
<dbReference type="SGD" id="S000005125">
    <property type="gene designation" value="PBR1"/>
</dbReference>
<dbReference type="VEuPathDB" id="FungiDB:YNL181W"/>
<dbReference type="eggNOG" id="KOG1208">
    <property type="taxonomic scope" value="Eukaryota"/>
</dbReference>
<dbReference type="HOGENOM" id="CLU_010194_44_1_1"/>
<dbReference type="InParanoid" id="P53878"/>
<dbReference type="OMA" id="NIEDPLW"/>
<dbReference type="OrthoDB" id="191979at2759"/>
<dbReference type="BioCyc" id="YEAST:G3O-33192-MONOMER"/>
<dbReference type="Reactome" id="R-SCE-5365859">
    <property type="pathway name" value="RA biosynthesis pathway"/>
</dbReference>
<dbReference type="BioGRID-ORCS" id="855540">
    <property type="hits" value="1 hit in 10 CRISPR screens"/>
</dbReference>
<dbReference type="PRO" id="PR:P53878"/>
<dbReference type="Proteomes" id="UP000002311">
    <property type="component" value="Chromosome XIV"/>
</dbReference>
<dbReference type="RNAct" id="P53878">
    <property type="molecule type" value="protein"/>
</dbReference>
<dbReference type="GO" id="GO:0005783">
    <property type="term" value="C:endoplasmic reticulum"/>
    <property type="evidence" value="ECO:0007005"/>
    <property type="project" value="SGD"/>
</dbReference>
<dbReference type="GO" id="GO:0005789">
    <property type="term" value="C:endoplasmic reticulum membrane"/>
    <property type="evidence" value="ECO:0007669"/>
    <property type="project" value="UniProtKB-SubCell"/>
</dbReference>
<dbReference type="GO" id="GO:0005635">
    <property type="term" value="C:nuclear envelope"/>
    <property type="evidence" value="ECO:0007005"/>
    <property type="project" value="SGD"/>
</dbReference>
<dbReference type="GO" id="GO:0016616">
    <property type="term" value="F:oxidoreductase activity, acting on the CH-OH group of donors, NAD or NADP as acceptor"/>
    <property type="evidence" value="ECO:0000250"/>
    <property type="project" value="SGD"/>
</dbReference>
<dbReference type="CDD" id="cd05327">
    <property type="entry name" value="retinol-DH_like_SDR_c_like"/>
    <property type="match status" value="1"/>
</dbReference>
<dbReference type="FunFam" id="3.40.50.720:FF:000647">
    <property type="entry name" value="YNL181W-like protein"/>
    <property type="match status" value="1"/>
</dbReference>
<dbReference type="Gene3D" id="3.40.50.720">
    <property type="entry name" value="NAD(P)-binding Rossmann-like Domain"/>
    <property type="match status" value="1"/>
</dbReference>
<dbReference type="InterPro" id="IPR036291">
    <property type="entry name" value="NAD(P)-bd_dom_sf"/>
</dbReference>
<dbReference type="InterPro" id="IPR002347">
    <property type="entry name" value="SDR_fam"/>
</dbReference>
<dbReference type="PANTHER" id="PTHR24320">
    <property type="entry name" value="RETINOL DEHYDROGENASE"/>
    <property type="match status" value="1"/>
</dbReference>
<dbReference type="PANTHER" id="PTHR24320:SF285">
    <property type="entry name" value="RETINOL DEHYDROGENASE 14"/>
    <property type="match status" value="1"/>
</dbReference>
<dbReference type="Pfam" id="PF00106">
    <property type="entry name" value="adh_short"/>
    <property type="match status" value="1"/>
</dbReference>
<dbReference type="SUPFAM" id="SSF51735">
    <property type="entry name" value="NAD(P)-binding Rossmann-fold domains"/>
    <property type="match status" value="1"/>
</dbReference>
<reference key="1">
    <citation type="journal article" date="1997" name="Nature">
        <title>The nucleotide sequence of Saccharomyces cerevisiae chromosome XIV and its evolutionary implications.</title>
        <authorList>
            <person name="Philippsen P."/>
            <person name="Kleine K."/>
            <person name="Poehlmann R."/>
            <person name="Duesterhoeft A."/>
            <person name="Hamberg K."/>
            <person name="Hegemann J.H."/>
            <person name="Obermaier B."/>
            <person name="Urrestarazu L.A."/>
            <person name="Aert R."/>
            <person name="Albermann K."/>
            <person name="Altmann R."/>
            <person name="Andre B."/>
            <person name="Baladron V."/>
            <person name="Ballesta J.P.G."/>
            <person name="Becam A.-M."/>
            <person name="Beinhauer J.D."/>
            <person name="Boskovic J."/>
            <person name="Buitrago M.J."/>
            <person name="Bussereau F."/>
            <person name="Coster F."/>
            <person name="Crouzet M."/>
            <person name="D'Angelo M."/>
            <person name="Dal Pero F."/>
            <person name="De Antoni A."/>
            <person name="del Rey F."/>
            <person name="Doignon F."/>
            <person name="Domdey H."/>
            <person name="Dubois E."/>
            <person name="Fiedler T.A."/>
            <person name="Fleig U."/>
            <person name="Floeth M."/>
            <person name="Fritz C."/>
            <person name="Gaillardin C."/>
            <person name="Garcia-Cantalejo J.M."/>
            <person name="Glansdorff N."/>
            <person name="Goffeau A."/>
            <person name="Gueldener U."/>
            <person name="Herbert C.J."/>
            <person name="Heumann K."/>
            <person name="Heuss-Neitzel D."/>
            <person name="Hilbert H."/>
            <person name="Hinni K."/>
            <person name="Iraqui Houssaini I."/>
            <person name="Jacquet M."/>
            <person name="Jimenez A."/>
            <person name="Jonniaux J.-L."/>
            <person name="Karpfinger-Hartl L."/>
            <person name="Lanfranchi G."/>
            <person name="Lepingle A."/>
            <person name="Levesque H."/>
            <person name="Lyck R."/>
            <person name="Maftahi M."/>
            <person name="Mallet L."/>
            <person name="Maurer C.T.C."/>
            <person name="Messenguy F."/>
            <person name="Mewes H.-W."/>
            <person name="Moestl D."/>
            <person name="Nasr F."/>
            <person name="Nicaud J.-M."/>
            <person name="Niedenthal R.K."/>
            <person name="Pandolfo D."/>
            <person name="Pierard A."/>
            <person name="Piravandi E."/>
            <person name="Planta R.J."/>
            <person name="Pohl T.M."/>
            <person name="Purnelle B."/>
            <person name="Rebischung C."/>
            <person name="Remacha M.A."/>
            <person name="Revuelta J.L."/>
            <person name="Rinke M."/>
            <person name="Saiz J.E."/>
            <person name="Sartorello F."/>
            <person name="Scherens B."/>
            <person name="Sen-Gupta M."/>
            <person name="Soler-Mira A."/>
            <person name="Urbanus J.H.M."/>
            <person name="Valle G."/>
            <person name="Van Dyck L."/>
            <person name="Verhasselt P."/>
            <person name="Vierendeels F."/>
            <person name="Vissers S."/>
            <person name="Voet M."/>
            <person name="Volckaert G."/>
            <person name="Wach A."/>
            <person name="Wambutt R."/>
            <person name="Wedler H."/>
            <person name="Zollner A."/>
            <person name="Hani J."/>
        </authorList>
    </citation>
    <scope>NUCLEOTIDE SEQUENCE [LARGE SCALE GENOMIC DNA]</scope>
    <source>
        <strain>ATCC 204508 / S288c</strain>
    </source>
</reference>
<reference key="2">
    <citation type="journal article" date="2014" name="G3 (Bethesda)">
        <title>The reference genome sequence of Saccharomyces cerevisiae: Then and now.</title>
        <authorList>
            <person name="Engel S.R."/>
            <person name="Dietrich F.S."/>
            <person name="Fisk D.G."/>
            <person name="Binkley G."/>
            <person name="Balakrishnan R."/>
            <person name="Costanzo M.C."/>
            <person name="Dwight S.S."/>
            <person name="Hitz B.C."/>
            <person name="Karra K."/>
            <person name="Nash R.S."/>
            <person name="Weng S."/>
            <person name="Wong E.D."/>
            <person name="Lloyd P."/>
            <person name="Skrzypek M.S."/>
            <person name="Miyasato S.R."/>
            <person name="Simison M."/>
            <person name="Cherry J.M."/>
        </authorList>
    </citation>
    <scope>GENOME REANNOTATION</scope>
    <scope>SEQUENCE REVISION TO 262</scope>
    <source>
        <strain>ATCC 204508 / S288c</strain>
    </source>
</reference>
<reference key="3">
    <citation type="journal article" date="1998" name="Proc. Natl. Acad. Sci. U.S.A.">
        <title>Large-scale protein structure modeling of the Saccharomyces cerevisiae genome.</title>
        <authorList>
            <person name="Sanchez R."/>
            <person name="Sali A."/>
        </authorList>
    </citation>
    <scope>PROBABLE FUNCTION</scope>
</reference>
<reference key="4">
    <citation type="journal article" date="2003" name="Mol. Cell">
        <title>Assigning function to yeast proteins by integration of technologies.</title>
        <authorList>
            <person name="Hazbun T.R."/>
            <person name="Malmstroem L."/>
            <person name="Anderson S."/>
            <person name="Graczyk B.J."/>
            <person name="Fox B."/>
            <person name="Riffle M."/>
            <person name="Sundin B.A."/>
            <person name="Aranda J.D."/>
            <person name="McDonald W.H."/>
            <person name="Chiu C.-H."/>
            <person name="Snydsman B.E."/>
            <person name="Bradley P."/>
            <person name="Muller E.G.D."/>
            <person name="Fields S."/>
            <person name="Baker D."/>
            <person name="Yates J.R. III"/>
            <person name="Davis T.N."/>
        </authorList>
    </citation>
    <scope>SUBCELLULAR LOCATION</scope>
</reference>
<reference key="5">
    <citation type="journal article" date="2003" name="Nature">
        <title>Global analysis of protein localization in budding yeast.</title>
        <authorList>
            <person name="Huh W.-K."/>
            <person name="Falvo J.V."/>
            <person name="Gerke L.C."/>
            <person name="Carroll A.S."/>
            <person name="Howson R.W."/>
            <person name="Weissman J.S."/>
            <person name="O'Shea E.K."/>
        </authorList>
    </citation>
    <scope>SUBCELLULAR LOCATION [LARGE SCALE ANALYSIS]</scope>
</reference>
<reference key="6">
    <citation type="journal article" date="2003" name="Nature">
        <title>Global analysis of protein expression in yeast.</title>
        <authorList>
            <person name="Ghaemmaghami S."/>
            <person name="Huh W.-K."/>
            <person name="Bower K."/>
            <person name="Howson R.W."/>
            <person name="Belle A."/>
            <person name="Dephoure N."/>
            <person name="O'Shea E.K."/>
            <person name="Weissman J.S."/>
        </authorList>
    </citation>
    <scope>LEVEL OF PROTEIN EXPRESSION [LARGE SCALE ANALYSIS]</scope>
</reference>
<reference key="7">
    <citation type="journal article" date="2016" name="Science">
        <title>A global genetic interaction network maps a wiring diagram of cellular function.</title>
        <authorList>
            <person name="Costanzo M."/>
            <person name="VanderSluis B."/>
            <person name="Koch E.N."/>
            <person name="Baryshnikova A."/>
            <person name="Pons C."/>
            <person name="Tan G."/>
            <person name="Wang W."/>
            <person name="Usaj M."/>
            <person name="Hanchard J."/>
            <person name="Lee S.D."/>
            <person name="Pelechano V."/>
            <person name="Styles E.B."/>
            <person name="Billmann M."/>
            <person name="van Leeuwen J."/>
            <person name="van Dyk N."/>
            <person name="Lin Z.Y."/>
            <person name="Kuzmin E."/>
            <person name="Nelson J."/>
            <person name="Piotrowski J.S."/>
            <person name="Srikumar T."/>
            <person name="Bahr S."/>
            <person name="Chen Y."/>
            <person name="Deshpande R."/>
            <person name="Kurat C.F."/>
            <person name="Li S.C."/>
            <person name="Li Z."/>
            <person name="Usaj M.M."/>
            <person name="Okada H."/>
            <person name="Pascoe N."/>
            <person name="San Luis B.J."/>
            <person name="Sharifpoor S."/>
            <person name="Shuteriqi E."/>
            <person name="Simpkins S.W."/>
            <person name="Snider J."/>
            <person name="Suresh H.G."/>
            <person name="Tan Y."/>
            <person name="Zhu H."/>
            <person name="Malod-Dognin N."/>
            <person name="Janjic V."/>
            <person name="Przulj N."/>
            <person name="Troyanskaya O.G."/>
            <person name="Stagljar I."/>
            <person name="Xia T."/>
            <person name="Ohya Y."/>
            <person name="Gingras A.C."/>
            <person name="Raught B."/>
            <person name="Boutros M."/>
            <person name="Steinmetz L.M."/>
            <person name="Moore C.L."/>
            <person name="Rosebrock A.P."/>
            <person name="Caudy A.A."/>
            <person name="Myers C.L."/>
            <person name="Andrews B."/>
            <person name="Boone C."/>
        </authorList>
    </citation>
    <scope>FUNCTION</scope>
</reference>
<proteinExistence type="evidence at protein level"/>